<feature type="chain" id="PRO_0000248112" description="Nucleoside triphosphate/diphosphate phosphatase">
    <location>
        <begin position="1"/>
        <end position="180"/>
    </location>
</feature>
<feature type="active site" description="Proton donor" evidence="1">
    <location>
        <position position="26"/>
    </location>
</feature>
<feature type="binding site" evidence="1">
    <location>
        <position position="90"/>
    </location>
    <ligand>
        <name>Mg(2+)</name>
        <dbReference type="ChEBI" id="CHEBI:18420"/>
        <label>1</label>
    </ligand>
</feature>
<feature type="binding site" evidence="1">
    <location>
        <position position="106"/>
    </location>
    <ligand>
        <name>Mg(2+)</name>
        <dbReference type="ChEBI" id="CHEBI:18420"/>
        <label>1</label>
    </ligand>
</feature>
<feature type="binding site" evidence="1">
    <location>
        <position position="108"/>
    </location>
    <ligand>
        <name>Mg(2+)</name>
        <dbReference type="ChEBI" id="CHEBI:18420"/>
        <label>2</label>
    </ligand>
</feature>
<feature type="binding site" evidence="1">
    <location>
        <position position="110"/>
    </location>
    <ligand>
        <name>Mg(2+)</name>
        <dbReference type="ChEBI" id="CHEBI:18420"/>
        <label>1</label>
    </ligand>
</feature>
<feature type="binding site" evidence="1">
    <location>
        <position position="110"/>
    </location>
    <ligand>
        <name>Mg(2+)</name>
        <dbReference type="ChEBI" id="CHEBI:18420"/>
        <label>2</label>
    </ligand>
</feature>
<feature type="binding site" evidence="1">
    <location>
        <position position="123"/>
    </location>
    <ligand>
        <name>Mg(2+)</name>
        <dbReference type="ChEBI" id="CHEBI:18420"/>
        <label>2</label>
    </ligand>
</feature>
<feature type="binding site" evidence="1">
    <location>
        <position position="126"/>
    </location>
    <ligand>
        <name>Mg(2+)</name>
        <dbReference type="ChEBI" id="CHEBI:18420"/>
        <label>2</label>
    </ligand>
</feature>
<sequence>MVRESIPKEGENIKIQSYKHDGKIHRVWSETTILKGTDHVVIGGNDHTLVTESDGRTWITREPAIVYFHSEYWFNVICMFREDGIYYYCNLSSPFVCDEEALKYIDYDLDIKVYPNGKYHLLDEDEYEQHMNQMNYPHDIDIILRRNVDILQQWIEQKKGPFAPDFIKVWKERYKKIRQY</sequence>
<gene>
    <name type="ordered locus">MW1807</name>
</gene>
<accession>Q7A0J0</accession>
<keyword id="KW-0378">Hydrolase</keyword>
<keyword id="KW-0460">Magnesium</keyword>
<keyword id="KW-0479">Metal-binding</keyword>
<name>NTDP_STAAW</name>
<reference key="1">
    <citation type="journal article" date="2002" name="Lancet">
        <title>Genome and virulence determinants of high virulence community-acquired MRSA.</title>
        <authorList>
            <person name="Baba T."/>
            <person name="Takeuchi F."/>
            <person name="Kuroda M."/>
            <person name="Yuzawa H."/>
            <person name="Aoki K."/>
            <person name="Oguchi A."/>
            <person name="Nagai Y."/>
            <person name="Iwama N."/>
            <person name="Asano K."/>
            <person name="Naimi T."/>
            <person name="Kuroda H."/>
            <person name="Cui L."/>
            <person name="Yamamoto K."/>
            <person name="Hiramatsu K."/>
        </authorList>
    </citation>
    <scope>NUCLEOTIDE SEQUENCE [LARGE SCALE GENOMIC DNA]</scope>
    <source>
        <strain>MW2</strain>
    </source>
</reference>
<protein>
    <recommendedName>
        <fullName evidence="1">Nucleoside triphosphate/diphosphate phosphatase</fullName>
        <ecNumber evidence="1">3.6.1.15</ecNumber>
        <ecNumber evidence="1">3.6.1.6</ecNumber>
    </recommendedName>
</protein>
<organism>
    <name type="scientific">Staphylococcus aureus (strain MW2)</name>
    <dbReference type="NCBI Taxonomy" id="196620"/>
    <lineage>
        <taxon>Bacteria</taxon>
        <taxon>Bacillati</taxon>
        <taxon>Bacillota</taxon>
        <taxon>Bacilli</taxon>
        <taxon>Bacillales</taxon>
        <taxon>Staphylococcaceae</taxon>
        <taxon>Staphylococcus</taxon>
    </lineage>
</organism>
<evidence type="ECO:0000255" key="1">
    <source>
        <dbReference type="HAMAP-Rule" id="MF_01568"/>
    </source>
</evidence>
<dbReference type="EC" id="3.6.1.15" evidence="1"/>
<dbReference type="EC" id="3.6.1.6" evidence="1"/>
<dbReference type="EMBL" id="BA000033">
    <property type="protein sequence ID" value="BAB95672.1"/>
    <property type="molecule type" value="Genomic_DNA"/>
</dbReference>
<dbReference type="RefSeq" id="WP_000251253.1">
    <property type="nucleotide sequence ID" value="NC_003923.1"/>
</dbReference>
<dbReference type="SMR" id="Q7A0J0"/>
<dbReference type="KEGG" id="sam:MW1807"/>
<dbReference type="HOGENOM" id="CLU_109787_1_0_9"/>
<dbReference type="GO" id="GO:0000287">
    <property type="term" value="F:magnesium ion binding"/>
    <property type="evidence" value="ECO:0007669"/>
    <property type="project" value="UniProtKB-UniRule"/>
</dbReference>
<dbReference type="GO" id="GO:0017110">
    <property type="term" value="F:nucleoside diphosphate phosphatase activity"/>
    <property type="evidence" value="ECO:0007669"/>
    <property type="project" value="UniProtKB-UniRule"/>
</dbReference>
<dbReference type="GO" id="GO:0017111">
    <property type="term" value="F:ribonucleoside triphosphate phosphatase activity"/>
    <property type="evidence" value="ECO:0007669"/>
    <property type="project" value="UniProtKB-UniRule"/>
</dbReference>
<dbReference type="Gene3D" id="2.40.380.10">
    <property type="entry name" value="FomD-like"/>
    <property type="match status" value="1"/>
</dbReference>
<dbReference type="HAMAP" id="MF_01568">
    <property type="entry name" value="Ntdp"/>
    <property type="match status" value="1"/>
</dbReference>
<dbReference type="InterPro" id="IPR007295">
    <property type="entry name" value="DUF402"/>
</dbReference>
<dbReference type="InterPro" id="IPR035930">
    <property type="entry name" value="FomD-like_sf"/>
</dbReference>
<dbReference type="InterPro" id="IPR050212">
    <property type="entry name" value="Ntdp-like"/>
</dbReference>
<dbReference type="InterPro" id="IPR016882">
    <property type="entry name" value="SA1684"/>
</dbReference>
<dbReference type="NCBIfam" id="NF010183">
    <property type="entry name" value="PRK13662.1"/>
    <property type="match status" value="1"/>
</dbReference>
<dbReference type="PANTHER" id="PTHR39159">
    <property type="match status" value="1"/>
</dbReference>
<dbReference type="PANTHER" id="PTHR39159:SF1">
    <property type="entry name" value="UPF0374 PROTEIN YGAC"/>
    <property type="match status" value="1"/>
</dbReference>
<dbReference type="Pfam" id="PF04167">
    <property type="entry name" value="DUF402"/>
    <property type="match status" value="1"/>
</dbReference>
<dbReference type="PIRSF" id="PIRSF028345">
    <property type="entry name" value="UCP028345"/>
    <property type="match status" value="1"/>
</dbReference>
<dbReference type="SUPFAM" id="SSF159234">
    <property type="entry name" value="FomD-like"/>
    <property type="match status" value="1"/>
</dbReference>
<proteinExistence type="inferred from homology"/>
<comment type="function">
    <text evidence="1">Has nucleoside phosphatase activity towards nucleoside triphosphates and nucleoside diphosphates.</text>
</comment>
<comment type="catalytic activity">
    <reaction evidence="1">
        <text>a ribonucleoside 5'-triphosphate + H2O = a ribonucleoside 5'-diphosphate + phosphate + H(+)</text>
        <dbReference type="Rhea" id="RHEA:23680"/>
        <dbReference type="ChEBI" id="CHEBI:15377"/>
        <dbReference type="ChEBI" id="CHEBI:15378"/>
        <dbReference type="ChEBI" id="CHEBI:43474"/>
        <dbReference type="ChEBI" id="CHEBI:57930"/>
        <dbReference type="ChEBI" id="CHEBI:61557"/>
        <dbReference type="EC" id="3.6.1.15"/>
    </reaction>
</comment>
<comment type="catalytic activity">
    <reaction evidence="1">
        <text>a ribonucleoside 5'-diphosphate + H2O = a ribonucleoside 5'-phosphate + phosphate + H(+)</text>
        <dbReference type="Rhea" id="RHEA:36799"/>
        <dbReference type="ChEBI" id="CHEBI:15377"/>
        <dbReference type="ChEBI" id="CHEBI:15378"/>
        <dbReference type="ChEBI" id="CHEBI:43474"/>
        <dbReference type="ChEBI" id="CHEBI:57930"/>
        <dbReference type="ChEBI" id="CHEBI:58043"/>
        <dbReference type="EC" id="3.6.1.6"/>
    </reaction>
</comment>
<comment type="cofactor">
    <cofactor evidence="1">
        <name>Mg(2+)</name>
        <dbReference type="ChEBI" id="CHEBI:18420"/>
    </cofactor>
</comment>
<comment type="similarity">
    <text evidence="1">Belongs to the Ntdp family.</text>
</comment>